<keyword id="KW-1185">Reference proteome</keyword>
<keyword id="KW-0687">Ribonucleoprotein</keyword>
<keyword id="KW-0689">Ribosomal protein</keyword>
<comment type="similarity">
    <text evidence="1">Belongs to the bacterial ribosomal protein bL33 family.</text>
</comment>
<name>RL332_SACEN</name>
<accession>A4FPR6</accession>
<evidence type="ECO:0000255" key="1">
    <source>
        <dbReference type="HAMAP-Rule" id="MF_00294"/>
    </source>
</evidence>
<proteinExistence type="inferred from homology"/>
<reference key="1">
    <citation type="journal article" date="2007" name="Nat. Biotechnol.">
        <title>Complete genome sequence of the erythromycin-producing bacterium Saccharopolyspora erythraea NRRL23338.</title>
        <authorList>
            <person name="Oliynyk M."/>
            <person name="Samborskyy M."/>
            <person name="Lester J.B."/>
            <person name="Mironenko T."/>
            <person name="Scott N."/>
            <person name="Dickens S."/>
            <person name="Haydock S.F."/>
            <person name="Leadlay P.F."/>
        </authorList>
    </citation>
    <scope>NUCLEOTIDE SEQUENCE [LARGE SCALE GENOMIC DNA]</scope>
    <source>
        <strain>ATCC 11635 / DSM 40517 / JCM 4748 / NBRC 13426 / NCIMB 8594 / NRRL 2338</strain>
    </source>
</reference>
<gene>
    <name evidence="1" type="primary">rpmG2</name>
    <name type="ordered locus">SACE_6877</name>
</gene>
<protein>
    <recommendedName>
        <fullName evidence="1">Large ribosomal subunit protein bL33B</fullName>
    </recommendedName>
    <alternativeName>
        <fullName evidence="1">50S ribosomal protein L33 2</fullName>
    </alternativeName>
</protein>
<dbReference type="EMBL" id="AM420293">
    <property type="protein sequence ID" value="CAM06041.1"/>
    <property type="molecule type" value="Genomic_DNA"/>
</dbReference>
<dbReference type="RefSeq" id="WP_009944078.1">
    <property type="nucleotide sequence ID" value="NC_009142.1"/>
</dbReference>
<dbReference type="SMR" id="A4FPR6"/>
<dbReference type="STRING" id="405948.SACE_6877"/>
<dbReference type="KEGG" id="sen:SACE_6877"/>
<dbReference type="eggNOG" id="COG0267">
    <property type="taxonomic scope" value="Bacteria"/>
</dbReference>
<dbReference type="HOGENOM" id="CLU_190949_0_2_11"/>
<dbReference type="OrthoDB" id="21586at2"/>
<dbReference type="Proteomes" id="UP000006728">
    <property type="component" value="Chromosome"/>
</dbReference>
<dbReference type="GO" id="GO:0005737">
    <property type="term" value="C:cytoplasm"/>
    <property type="evidence" value="ECO:0007669"/>
    <property type="project" value="UniProtKB-ARBA"/>
</dbReference>
<dbReference type="GO" id="GO:1990904">
    <property type="term" value="C:ribonucleoprotein complex"/>
    <property type="evidence" value="ECO:0007669"/>
    <property type="project" value="UniProtKB-KW"/>
</dbReference>
<dbReference type="GO" id="GO:0005840">
    <property type="term" value="C:ribosome"/>
    <property type="evidence" value="ECO:0007669"/>
    <property type="project" value="UniProtKB-KW"/>
</dbReference>
<dbReference type="GO" id="GO:0003735">
    <property type="term" value="F:structural constituent of ribosome"/>
    <property type="evidence" value="ECO:0007669"/>
    <property type="project" value="InterPro"/>
</dbReference>
<dbReference type="GO" id="GO:0006412">
    <property type="term" value="P:translation"/>
    <property type="evidence" value="ECO:0007669"/>
    <property type="project" value="UniProtKB-UniRule"/>
</dbReference>
<dbReference type="Gene3D" id="2.20.28.120">
    <property type="entry name" value="Ribosomal protein L33"/>
    <property type="match status" value="1"/>
</dbReference>
<dbReference type="HAMAP" id="MF_00294">
    <property type="entry name" value="Ribosomal_bL33"/>
    <property type="match status" value="1"/>
</dbReference>
<dbReference type="InterPro" id="IPR001705">
    <property type="entry name" value="Ribosomal_bL33"/>
</dbReference>
<dbReference type="InterPro" id="IPR018264">
    <property type="entry name" value="Ribosomal_bL33_CS"/>
</dbReference>
<dbReference type="InterPro" id="IPR038584">
    <property type="entry name" value="Ribosomal_bL33_sf"/>
</dbReference>
<dbReference type="InterPro" id="IPR011332">
    <property type="entry name" value="Ribosomal_zn-bd"/>
</dbReference>
<dbReference type="NCBIfam" id="NF001764">
    <property type="entry name" value="PRK00504.1"/>
    <property type="match status" value="1"/>
</dbReference>
<dbReference type="NCBIfam" id="NF001860">
    <property type="entry name" value="PRK00595.1"/>
    <property type="match status" value="1"/>
</dbReference>
<dbReference type="NCBIfam" id="TIGR01023">
    <property type="entry name" value="rpmG_bact"/>
    <property type="match status" value="1"/>
</dbReference>
<dbReference type="PANTHER" id="PTHR43168">
    <property type="entry name" value="50S RIBOSOMAL PROTEIN L33, CHLOROPLASTIC"/>
    <property type="match status" value="1"/>
</dbReference>
<dbReference type="PANTHER" id="PTHR43168:SF2">
    <property type="entry name" value="LARGE RIBOSOMAL SUBUNIT PROTEIN BL33C"/>
    <property type="match status" value="1"/>
</dbReference>
<dbReference type="Pfam" id="PF00471">
    <property type="entry name" value="Ribosomal_L33"/>
    <property type="match status" value="1"/>
</dbReference>
<dbReference type="SUPFAM" id="SSF57829">
    <property type="entry name" value="Zn-binding ribosomal proteins"/>
    <property type="match status" value="1"/>
</dbReference>
<dbReference type="PROSITE" id="PS00582">
    <property type="entry name" value="RIBOSOMAL_L33"/>
    <property type="match status" value="1"/>
</dbReference>
<sequence length="54" mass="6369">MAATDVRPKITLACEECKHRNYITNKNRRNDPDRLAMKKFCPNCGTHRVHKETR</sequence>
<organism>
    <name type="scientific">Saccharopolyspora erythraea (strain ATCC 11635 / DSM 40517 / JCM 4748 / NBRC 13426 / NCIMB 8594 / NRRL 2338)</name>
    <dbReference type="NCBI Taxonomy" id="405948"/>
    <lineage>
        <taxon>Bacteria</taxon>
        <taxon>Bacillati</taxon>
        <taxon>Actinomycetota</taxon>
        <taxon>Actinomycetes</taxon>
        <taxon>Pseudonocardiales</taxon>
        <taxon>Pseudonocardiaceae</taxon>
        <taxon>Saccharopolyspora</taxon>
    </lineage>
</organism>
<feature type="chain" id="PRO_0000356642" description="Large ribosomal subunit protein bL33B">
    <location>
        <begin position="1"/>
        <end position="54"/>
    </location>
</feature>